<keyword id="KW-0150">Chloroplast</keyword>
<keyword id="KW-0378">Hydrolase</keyword>
<keyword id="KW-0479">Metal-binding</keyword>
<keyword id="KW-0482">Metalloprotease</keyword>
<keyword id="KW-0934">Plastid</keyword>
<keyword id="KW-0645">Protease</keyword>
<keyword id="KW-0809">Transit peptide</keyword>
<keyword id="KW-0862">Zinc</keyword>
<sequence>MAASTSTSSLSVVGTNLSLPPHRHHRHFHSPSSISTRIRTNRLFLSSSLAFSSPRDARVVHAGLGLRRNTPDVWKHYSSVLSQPTAPVPVRQSCTSCCLASAKKRRSNLPRFVPGAFFDSSSFGLSKDKLRHASVKRVQLPHATVGPDEPHAASTTWQEGVAEKQDLSLFDSELERLEGFLGSELPSHPKLHRGQLKNGIRYLILPNKVPPTRFEAHMEVHVGSIDEEDDEQGIAHMIEHVAFLGSKKREKLLGTGARSNAYTDFHHTVFHIHSPTSTKDSDDLLPSVLDALNEITFHPNFLASRIEKERRAILSELQMMNTIEYRVDCQLLQHLHSENKLSKRFPIGLEEQIKKWDADKIRKFHERWYFPANATLYIVGDIGNIPKTVNQIEAVFGQTGVDNEKGSVATSSAFGAMASFLVPKLSVGLGGNSIERPTNTTDQSKVFKKERHAVRPPVKHTWSLPGSSANLKPPQIFQHELLQNFSINMFCKIPVNKVQTYRDLRIVLMKRIFLSALHFRINTRYKSSNPPFTSVELDHSDSGREGCTVTTLTITAEPKNWQNAIRVAVHEVRRLKEFGVTQGELTRYLDALLRDSEHLAAMIDNVSSVDNLDFIMESDALGHKVMDQSQGHESLIAVAGTVTLDEVNSVGAQVLEFIADFGKLSAPLPAAIVACVPKKVHIEGAGETEFKISSTEITDAMKAGLDEPIEPEPELEVPKELVQSSTLQELKNQRKPAFIPVSPEIEAKKLHDEETGITRLRLANGIPVNYKISKSETQSGVMRLIVGGGRAAEGSDSRGSVIVGVRTLSEGGRVGNFSREQVELFCVNNQINCSLESTEEFISLEFRFTLRNNGMRAAFQLLHMVLEHSVWSDDALDRARQVYLSYYRSIPKSLERSTAHKLMVAMLDGDERFTEPTPSSLENLTLQSVKDAVMNQFVGNNMEVSIVGDFTEEEIESCILDYLGTAQATGNFKNQQQIIPPTFRLSPSSLQSQEVFLNDTDERACAYIAGPAPNRWGFTADGNDLLETIDNASSVNNNGTKSDALQTEGAPRRSLRSHPLFFGITMGLLSEIINSRLFTTVRDSLGLTYDVSFELNLFDRLKLGWYVVSVTSTPSKVHKAVDACKNVLRGLHSNGITVRELDRAKRTLLMRHEAEIKSNAYWLGLLAHLQSSSVPRKDLSCIKDLTSLYEAATIEDTCLAYEQLKVDEDSLYSCIGVSGAQAAQDIAAPVEEEEAGEGYPGVLPMGRGLSTMTRPTT</sequence>
<reference key="1">
    <citation type="journal article" date="1995" name="Proc. Natl. Acad. Sci. U.S.A.">
        <title>A chloroplast processing enzyme involved in precursor maturation shares a zinc-binding motif with a recently recognized family of metalloendopeptidases.</title>
        <authorList>
            <person name="VanderVere P.S."/>
            <person name="Bennett T.M."/>
            <person name="Oblong J.E."/>
            <person name="Lamppa G.K."/>
        </authorList>
    </citation>
    <scope>NUCLEOTIDE SEQUENCE [MRNA]</scope>
    <scope>SUBCELLULAR LOCATION</scope>
    <scope>FUNCTION</scope>
</reference>
<reference key="2">
    <citation type="journal article" date="1992" name="EMBO J.">
        <title>Identification of two structurally related proteins involved in proteolytic processing of precursors targeted to the chloroplast.</title>
        <authorList>
            <person name="Oblong J.E."/>
            <person name="Lamppa G.K."/>
        </authorList>
    </citation>
    <scope>FUNCTION</scope>
    <scope>SUBCELLULAR LOCATION</scope>
</reference>
<reference key="3">
    <citation type="journal article" date="1998" name="Proc. Natl. Acad. Sci. U.S.A.">
        <title>A chloroplast processing enzyme functions as the general stromal processing peptidase.</title>
        <authorList>
            <person name="Richter S."/>
            <person name="Lamppa G.K."/>
        </authorList>
    </citation>
    <scope>FUNCTION</scope>
    <scope>COFACTOR</scope>
</reference>
<reference key="4">
    <citation type="journal article" date="1999" name="J. Cell Biol.">
        <title>Stromal processing peptidase binds transit peptides and initiates their ATP-dependent turnover in chloroplasts.</title>
        <authorList>
            <person name="Richter S."/>
            <person name="Lamppa G.K."/>
        </authorList>
    </citation>
    <scope>FUNCTION</scope>
    <scope>CATALYTIC ACTIVITY</scope>
</reference>
<reference key="5">
    <citation type="journal article" date="2002" name="J. Biol. Chem.">
        <title>Determinants for removal and degradation of transit peptides of chloroplast precursor proteins.</title>
        <authorList>
            <person name="Richter S."/>
            <person name="Lamppa G.K."/>
        </authorList>
    </citation>
    <scope>FUNCTION</scope>
</reference>
<reference key="6">
    <citation type="journal article" date="2003" name="J. Biol. Chem.">
        <title>Structural properties of the chloroplast stromal processing peptidase required for its function in transit peptide removal.</title>
        <authorList>
            <person name="Richter S."/>
            <person name="Lamppa G.K."/>
        </authorList>
    </citation>
    <scope>MUTAGENESIS OF HIS-236 AND GLU-239</scope>
    <scope>CATALYTIC ACTIVITY</scope>
</reference>
<reference key="7">
    <citation type="journal article" date="2006" name="Physiol. Plantarum">
        <title>Function of the stromal processing peptidase in the chloroplast import pathway.</title>
        <authorList>
            <person name="Richter S."/>
            <person name="Zhong R."/>
            <person name="Lamppa G.K."/>
        </authorList>
    </citation>
    <scope>REVIEW</scope>
</reference>
<reference key="8">
    <citation type="journal article" date="2013" name="Biochim. Biophys. Acta">
        <title>Processing peptidases in mitochondria and chloroplasts.</title>
        <authorList>
            <person name="Teixeira P.F."/>
            <person name="Glaser E."/>
        </authorList>
    </citation>
    <scope>REVIEW</scope>
</reference>
<organism>
    <name type="scientific">Pisum sativum</name>
    <name type="common">Garden pea</name>
    <name type="synonym">Lathyrus oleraceus</name>
    <dbReference type="NCBI Taxonomy" id="3888"/>
    <lineage>
        <taxon>Eukaryota</taxon>
        <taxon>Viridiplantae</taxon>
        <taxon>Streptophyta</taxon>
        <taxon>Embryophyta</taxon>
        <taxon>Tracheophyta</taxon>
        <taxon>Spermatophyta</taxon>
        <taxon>Magnoliopsida</taxon>
        <taxon>eudicotyledons</taxon>
        <taxon>Gunneridae</taxon>
        <taxon>Pentapetalae</taxon>
        <taxon>rosids</taxon>
        <taxon>fabids</taxon>
        <taxon>Fabales</taxon>
        <taxon>Fabaceae</taxon>
        <taxon>Papilionoideae</taxon>
        <taxon>50 kb inversion clade</taxon>
        <taxon>NPAAA clade</taxon>
        <taxon>Hologalegina</taxon>
        <taxon>IRL clade</taxon>
        <taxon>Fabeae</taxon>
        <taxon>Pisum</taxon>
    </lineage>
</organism>
<dbReference type="EC" id="3.4.24.-" evidence="4"/>
<dbReference type="EMBL" id="U25111">
    <property type="protein sequence ID" value="AAA81472.1"/>
    <property type="status" value="ALT_INIT"/>
    <property type="molecule type" value="mRNA"/>
</dbReference>
<dbReference type="PIR" id="T06521">
    <property type="entry name" value="T06521"/>
</dbReference>
<dbReference type="SMR" id="Q40983"/>
<dbReference type="MEROPS" id="M16.004"/>
<dbReference type="BRENDA" id="3.4.21.102">
    <property type="organism ID" value="4872"/>
</dbReference>
<dbReference type="GO" id="GO:0009570">
    <property type="term" value="C:chloroplast stroma"/>
    <property type="evidence" value="ECO:0000314"/>
    <property type="project" value="UniProtKB"/>
</dbReference>
<dbReference type="GO" id="GO:0046872">
    <property type="term" value="F:metal ion binding"/>
    <property type="evidence" value="ECO:0000314"/>
    <property type="project" value="UniProtKB"/>
</dbReference>
<dbReference type="GO" id="GO:0004222">
    <property type="term" value="F:metalloendopeptidase activity"/>
    <property type="evidence" value="ECO:0000314"/>
    <property type="project" value="UniProtKB"/>
</dbReference>
<dbReference type="GO" id="GO:0016485">
    <property type="term" value="P:protein processing"/>
    <property type="evidence" value="ECO:0000314"/>
    <property type="project" value="UniProtKB"/>
</dbReference>
<dbReference type="FunFam" id="3.30.830.10:FF:000024">
    <property type="entry name" value="Stromal processing peptidase chloroplastic"/>
    <property type="match status" value="1"/>
</dbReference>
<dbReference type="FunFam" id="3.30.830.10:FF:000025">
    <property type="entry name" value="Stromal processing peptidase chloroplastic"/>
    <property type="match status" value="1"/>
</dbReference>
<dbReference type="FunFam" id="3.30.830.10:FF:000033">
    <property type="entry name" value="Stromal processing peptidase, chloroplastic"/>
    <property type="match status" value="1"/>
</dbReference>
<dbReference type="FunFam" id="3.30.830.10:FF:000040">
    <property type="entry name" value="Stromal processing peptidase, chloroplastic"/>
    <property type="match status" value="1"/>
</dbReference>
<dbReference type="Gene3D" id="3.30.830.10">
    <property type="entry name" value="Metalloenzyme, LuxS/M16 peptidase-like"/>
    <property type="match status" value="4"/>
</dbReference>
<dbReference type="InterPro" id="IPR011249">
    <property type="entry name" value="Metalloenz_LuxS/M16"/>
</dbReference>
<dbReference type="InterPro" id="IPR011765">
    <property type="entry name" value="Pept_M16_N"/>
</dbReference>
<dbReference type="InterPro" id="IPR050626">
    <property type="entry name" value="Peptidase_M16"/>
</dbReference>
<dbReference type="InterPro" id="IPR007863">
    <property type="entry name" value="Peptidase_M16_C"/>
</dbReference>
<dbReference type="PANTHER" id="PTHR43690">
    <property type="entry name" value="NARDILYSIN"/>
    <property type="match status" value="1"/>
</dbReference>
<dbReference type="PANTHER" id="PTHR43690:SF33">
    <property type="entry name" value="STROMAL PROCESSING PEPTIDASE, CHLOROPLASTIC"/>
    <property type="match status" value="1"/>
</dbReference>
<dbReference type="Pfam" id="PF00675">
    <property type="entry name" value="Peptidase_M16"/>
    <property type="match status" value="1"/>
</dbReference>
<dbReference type="Pfam" id="PF05193">
    <property type="entry name" value="Peptidase_M16_C"/>
    <property type="match status" value="2"/>
</dbReference>
<dbReference type="SUPFAM" id="SSF63411">
    <property type="entry name" value="LuxS/MPP-like metallohydrolase"/>
    <property type="match status" value="3"/>
</dbReference>
<name>SPP_PEA</name>
<proteinExistence type="evidence at protein level"/>
<gene>
    <name evidence="12" type="primary">SPP</name>
    <name evidence="9" type="synonym">CPE</name>
</gene>
<accession>Q40983</accession>
<feature type="transit peptide" description="Chloroplast" evidence="8 10 11">
    <location>
        <begin position="1"/>
        <end position="142"/>
    </location>
</feature>
<feature type="chain" id="PRO_0000435736" description="Stromal processing peptidase, chloroplastic">
    <location>
        <begin position="143"/>
        <end position="1257"/>
    </location>
</feature>
<feature type="region of interest" description="Disordered" evidence="1">
    <location>
        <begin position="1233"/>
        <end position="1257"/>
    </location>
</feature>
<feature type="active site" description="Proton acceptor" evidence="4 6">
    <location>
        <position position="239"/>
    </location>
</feature>
<feature type="active site" evidence="12">
    <location>
        <position position="309"/>
    </location>
</feature>
<feature type="binding site" evidence="4 6">
    <location>
        <position position="236"/>
    </location>
    <ligand>
        <name>Zn(2+)</name>
        <dbReference type="ChEBI" id="CHEBI:29105"/>
    </ligand>
</feature>
<feature type="binding site" evidence="4 6">
    <location>
        <position position="240"/>
    </location>
    <ligand>
        <name>Zn(2+)</name>
        <dbReference type="ChEBI" id="CHEBI:29105"/>
    </ligand>
</feature>
<feature type="binding site" evidence="12">
    <location>
        <position position="316"/>
    </location>
    <ligand>
        <name>Zn(2+)</name>
        <dbReference type="ChEBI" id="CHEBI:29105"/>
    </ligand>
</feature>
<feature type="mutagenesis site" description="Abolishes endopeptidase activity without affecting transit peptide binding." evidence="4">
    <original>H</original>
    <variation>L</variation>
    <location>
        <position position="236"/>
    </location>
</feature>
<feature type="mutagenesis site" description="Abolishes endopeptidase activity without affecting transit peptide binding." evidence="4">
    <original>E</original>
    <variation>Q</variation>
    <location>
        <position position="239"/>
    </location>
</feature>
<evidence type="ECO:0000256" key="1">
    <source>
        <dbReference type="SAM" id="MobiDB-lite"/>
    </source>
</evidence>
<evidence type="ECO:0000269" key="2">
    <source>
    </source>
</evidence>
<evidence type="ECO:0000269" key="3">
    <source>
    </source>
</evidence>
<evidence type="ECO:0000269" key="4">
    <source>
    </source>
</evidence>
<evidence type="ECO:0000269" key="5">
    <source>
    </source>
</evidence>
<evidence type="ECO:0000269" key="6">
    <source>
    </source>
</evidence>
<evidence type="ECO:0000269" key="7">
    <source>
    </source>
</evidence>
<evidence type="ECO:0000303" key="8">
    <source>
    </source>
</evidence>
<evidence type="ECO:0000303" key="9">
    <source>
    </source>
</evidence>
<evidence type="ECO:0000303" key="10">
    <source>
    </source>
</evidence>
<evidence type="ECO:0000303" key="11">
    <source ref="7"/>
</evidence>
<evidence type="ECO:0000305" key="12"/>
<protein>
    <recommendedName>
        <fullName evidence="12">Stromal processing peptidase, chloroplastic</fullName>
        <ecNumber evidence="4">3.4.24.-</ecNumber>
    </recommendedName>
    <alternativeName>
        <fullName evidence="9">Chloroplast processing enzyme</fullName>
    </alternativeName>
</protein>
<comment type="function">
    <text evidence="2 3 5 6 7">Cleaves presequences (transit peptides) from chloroplastic protein precursors (PubMed:1385116, PubMed:7638164, PubMed:9636172). Initially recognizes a precursor by binding to the C-terminus of its transit peptide and then removes the transit peptide in a single endoproteolytic step. In a next step, pursues the cleavage of transit peptide to a subfragment form (PubMed:10508853, PubMed:12235143).</text>
</comment>
<comment type="cofactor">
    <cofactor evidence="7">
        <name>Zn(2+)</name>
        <dbReference type="ChEBI" id="CHEBI:29105"/>
    </cofactor>
    <text evidence="7">Binds 1 zinc ion per subunit.</text>
</comment>
<comment type="subcellular location">
    <subcellularLocation>
        <location evidence="5 6">Plastid</location>
        <location evidence="5 6">Chloroplast stroma</location>
    </subcellularLocation>
</comment>
<comment type="similarity">
    <text evidence="12">Belongs to the peptidase M16 family.</text>
</comment>
<comment type="sequence caution" evidence="12">
    <conflict type="erroneous initiation">
        <sequence resource="EMBL-CDS" id="AAA81472"/>
    </conflict>
    <text>Extended N-terminus.</text>
</comment>